<evidence type="ECO:0000250" key="1"/>
<evidence type="ECO:0000255" key="2"/>
<evidence type="ECO:0000269" key="3">
    <source>
    </source>
</evidence>
<evidence type="ECO:0000269" key="4">
    <source>
    </source>
</evidence>
<evidence type="ECO:0000269" key="5">
    <source>
    </source>
</evidence>
<evidence type="ECO:0000269" key="6">
    <source>
    </source>
</evidence>
<evidence type="ECO:0000305" key="7"/>
<evidence type="ECO:0007829" key="8">
    <source>
        <dbReference type="PDB" id="6LIY"/>
    </source>
</evidence>
<proteinExistence type="evidence at protein level"/>
<keyword id="KW-0002">3D-structure</keyword>
<keyword id="KW-0131">Cell cycle</keyword>
<keyword id="KW-0132">Cell division</keyword>
<keyword id="KW-0150">Chloroplast</keyword>
<keyword id="KW-0217">Developmental protein</keyword>
<keyword id="KW-0456">Lyase</keyword>
<keyword id="KW-0472">Membrane</keyword>
<keyword id="KW-0611">Plant defense</keyword>
<keyword id="KW-0934">Plastid</keyword>
<keyword id="KW-1002">Plastid outer membrane</keyword>
<keyword id="KW-1185">Reference proteome</keyword>
<keyword id="KW-0812">Transmembrane</keyword>
<keyword id="KW-1133">Transmembrane helix</keyword>
<name>CRL_ARATH</name>
<sequence length="269" mass="30330">MGTESGSDPESSSNGWSRARGLVVKTLVLIGGALLIKRLTKSTTRRDHARVVSRSLTGEKFTREQASRDPDNYFNIRMLSCPAAEMVDGSEVLYLEQAFWRTPQKPFRQRLYMVKPCPKELKCDVEVSSYAIRDAEEYKNFCDRPKDQRPLPEEVIGDIGEHLTTIHLNCCDRGKRCLYEGSTSPGGFPNSWNGASYCTSDLAVLKNNEIHLWDRGFDENRNQVWGPKEGPYEFKPATSSSINENLSALNILYQSSIDKPIQGSLILQD</sequence>
<organism>
    <name type="scientific">Arabidopsis thaliana</name>
    <name type="common">Mouse-ear cress</name>
    <dbReference type="NCBI Taxonomy" id="3702"/>
    <lineage>
        <taxon>Eukaryota</taxon>
        <taxon>Viridiplantae</taxon>
        <taxon>Streptophyta</taxon>
        <taxon>Embryophyta</taxon>
        <taxon>Tracheophyta</taxon>
        <taxon>Spermatophyta</taxon>
        <taxon>Magnoliopsida</taxon>
        <taxon>eudicotyledons</taxon>
        <taxon>Gunneridae</taxon>
        <taxon>Pentapetalae</taxon>
        <taxon>rosids</taxon>
        <taxon>malvids</taxon>
        <taxon>Brassicales</taxon>
        <taxon>Brassicaceae</taxon>
        <taxon>Camelineae</taxon>
        <taxon>Arabidopsis</taxon>
    </lineage>
</organism>
<dbReference type="EC" id="4.-.-.-"/>
<dbReference type="EMBL" id="AB120415">
    <property type="protein sequence ID" value="BAD12566.1"/>
    <property type="molecule type" value="mRNA"/>
</dbReference>
<dbReference type="EMBL" id="AB017063">
    <property type="protein sequence ID" value="BAB08748.1"/>
    <property type="molecule type" value="Genomic_DNA"/>
</dbReference>
<dbReference type="EMBL" id="CP002688">
    <property type="protein sequence ID" value="AED96022.1"/>
    <property type="molecule type" value="Genomic_DNA"/>
</dbReference>
<dbReference type="EMBL" id="AF370196">
    <property type="protein sequence ID" value="AAK44011.1"/>
    <property type="molecule type" value="mRNA"/>
</dbReference>
<dbReference type="EMBL" id="AY113932">
    <property type="protein sequence ID" value="AAM44980.1"/>
    <property type="molecule type" value="mRNA"/>
</dbReference>
<dbReference type="EMBL" id="AY086572">
    <property type="protein sequence ID" value="AAM63635.1"/>
    <property type="molecule type" value="mRNA"/>
</dbReference>
<dbReference type="RefSeq" id="NP_199915.1">
    <property type="nucleotide sequence ID" value="NM_124481.4"/>
</dbReference>
<dbReference type="PDB" id="6LIX">
    <property type="method" value="X-ray"/>
    <property type="resolution" value="2.38 A"/>
    <property type="chains" value="A/B=1-269"/>
</dbReference>
<dbReference type="PDB" id="6LIY">
    <property type="method" value="X-ray"/>
    <property type="resolution" value="1.76 A"/>
    <property type="chains" value="A/B=1-269"/>
</dbReference>
<dbReference type="PDBsum" id="6LIX"/>
<dbReference type="PDBsum" id="6LIY"/>
<dbReference type="SMR" id="Q9FI46"/>
<dbReference type="BioGRID" id="20420">
    <property type="interactions" value="2"/>
</dbReference>
<dbReference type="FunCoup" id="Q9FI46">
    <property type="interactions" value="902"/>
</dbReference>
<dbReference type="STRING" id="3702.Q9FI46"/>
<dbReference type="iPTMnet" id="Q9FI46"/>
<dbReference type="PaxDb" id="3702-AT5G51020.1"/>
<dbReference type="ProteomicsDB" id="224531"/>
<dbReference type="EnsemblPlants" id="AT5G51020.1">
    <property type="protein sequence ID" value="AT5G51020.1"/>
    <property type="gene ID" value="AT5G51020"/>
</dbReference>
<dbReference type="GeneID" id="835175"/>
<dbReference type="Gramene" id="AT5G51020.1">
    <property type="protein sequence ID" value="AT5G51020.1"/>
    <property type="gene ID" value="AT5G51020"/>
</dbReference>
<dbReference type="KEGG" id="ath:AT5G51020"/>
<dbReference type="Araport" id="AT5G51020"/>
<dbReference type="TAIR" id="AT5G51020">
    <property type="gene designation" value="CRL"/>
</dbReference>
<dbReference type="eggNOG" id="ENOG502QU5I">
    <property type="taxonomic scope" value="Eukaryota"/>
</dbReference>
<dbReference type="HOGENOM" id="CLU_077016_0_0_1"/>
<dbReference type="InParanoid" id="Q9FI46"/>
<dbReference type="OMA" id="YMVKPCS"/>
<dbReference type="OrthoDB" id="1891035at2759"/>
<dbReference type="PhylomeDB" id="Q9FI46"/>
<dbReference type="PRO" id="PR:Q9FI46"/>
<dbReference type="Proteomes" id="UP000006548">
    <property type="component" value="Chromosome 5"/>
</dbReference>
<dbReference type="ExpressionAtlas" id="Q9FI46">
    <property type="expression patterns" value="baseline and differential"/>
</dbReference>
<dbReference type="GO" id="GO:0009707">
    <property type="term" value="C:chloroplast outer membrane"/>
    <property type="evidence" value="ECO:0000314"/>
    <property type="project" value="TAIR"/>
</dbReference>
<dbReference type="GO" id="GO:0009536">
    <property type="term" value="C:plastid"/>
    <property type="evidence" value="ECO:0007005"/>
    <property type="project" value="TAIR"/>
</dbReference>
<dbReference type="GO" id="GO:0016829">
    <property type="term" value="F:lyase activity"/>
    <property type="evidence" value="ECO:0007669"/>
    <property type="project" value="UniProtKB-KW"/>
</dbReference>
<dbReference type="GO" id="GO:0051301">
    <property type="term" value="P:cell division"/>
    <property type="evidence" value="ECO:0007669"/>
    <property type="project" value="UniProtKB-KW"/>
</dbReference>
<dbReference type="GO" id="GO:0098586">
    <property type="term" value="P:cellular response to virus"/>
    <property type="evidence" value="ECO:0000314"/>
    <property type="project" value="UniProtKB"/>
</dbReference>
<dbReference type="GO" id="GO:0010020">
    <property type="term" value="P:chloroplast fission"/>
    <property type="evidence" value="ECO:0000315"/>
    <property type="project" value="TAIR"/>
</dbReference>
<dbReference type="GO" id="GO:0006952">
    <property type="term" value="P:defense response"/>
    <property type="evidence" value="ECO:0007669"/>
    <property type="project" value="UniProtKB-KW"/>
</dbReference>
<dbReference type="GO" id="GO:0043572">
    <property type="term" value="P:plastid fission"/>
    <property type="evidence" value="ECO:0000315"/>
    <property type="project" value="TAIR"/>
</dbReference>
<dbReference type="GO" id="GO:0051302">
    <property type="term" value="P:regulation of cell division"/>
    <property type="evidence" value="ECO:0000315"/>
    <property type="project" value="TAIR"/>
</dbReference>
<dbReference type="GO" id="GO:0000302">
    <property type="term" value="P:response to reactive oxygen species"/>
    <property type="evidence" value="ECO:0000315"/>
    <property type="project" value="TAIR"/>
</dbReference>
<dbReference type="GO" id="GO:0046741">
    <property type="term" value="P:transport of virus in host, tissue to tissue"/>
    <property type="evidence" value="ECO:0000315"/>
    <property type="project" value="UniProtKB"/>
</dbReference>
<dbReference type="CDD" id="cd16338">
    <property type="entry name" value="CpcT"/>
    <property type="match status" value="1"/>
</dbReference>
<dbReference type="FunFam" id="2.40.128.590:FF:000001">
    <property type="entry name" value="Chromophore lyase CRL, chloroplastic"/>
    <property type="match status" value="1"/>
</dbReference>
<dbReference type="Gene3D" id="2.40.128.590">
    <property type="entry name" value="CpcT/CpeT domain"/>
    <property type="match status" value="1"/>
</dbReference>
<dbReference type="InterPro" id="IPR010404">
    <property type="entry name" value="CpcT/CpeT"/>
</dbReference>
<dbReference type="InterPro" id="IPR038672">
    <property type="entry name" value="CpcT/CpeT_sf"/>
</dbReference>
<dbReference type="PANTHER" id="PTHR35137">
    <property type="entry name" value="CHROMOPHORE LYASE CRL, CHLOROPLASTIC"/>
    <property type="match status" value="1"/>
</dbReference>
<dbReference type="PANTHER" id="PTHR35137:SF1">
    <property type="entry name" value="CHROMOPHORE LYASE CRL, CHLOROPLASTIC"/>
    <property type="match status" value="1"/>
</dbReference>
<dbReference type="Pfam" id="PF06206">
    <property type="entry name" value="CpeT"/>
    <property type="match status" value="1"/>
</dbReference>
<reference key="1">
    <citation type="journal article" date="2004" name="Plant J.">
        <title>A mutation of the CRUMPLED LEAF gene that encodes a protein localized in the outer envelope membrane of plastids affects the pattern of cell division, cell differentiation, and plastid division in Arabidopsis.</title>
        <authorList>
            <person name="Asano T."/>
            <person name="Yoshioka Y."/>
            <person name="Kurei S."/>
            <person name="Sakamoto W."/>
            <person name="Sodmergen X."/>
            <person name="Machida Y."/>
        </authorList>
    </citation>
    <scope>NUCLEOTIDE SEQUENCE [MRNA]</scope>
    <scope>FUNCTION</scope>
    <scope>DISRUPTION PHENOTYPE</scope>
    <scope>SUBCELLULAR LOCATION</scope>
    <scope>TISSUE SPECIFICITY</scope>
    <source>
        <strain>cv. Columbia</strain>
    </source>
</reference>
<reference key="2">
    <citation type="journal article" date="1999" name="DNA Res.">
        <title>Structural analysis of Arabidopsis thaliana chromosome 5. IX. Sequence features of the regions of 1,011,550 bp covered by seventeen P1 and TAC clones.</title>
        <authorList>
            <person name="Kaneko T."/>
            <person name="Katoh T."/>
            <person name="Sato S."/>
            <person name="Nakamura Y."/>
            <person name="Asamizu E."/>
            <person name="Kotani H."/>
            <person name="Miyajima N."/>
            <person name="Tabata S."/>
        </authorList>
    </citation>
    <scope>NUCLEOTIDE SEQUENCE [LARGE SCALE GENOMIC DNA]</scope>
    <source>
        <strain>cv. Columbia</strain>
    </source>
</reference>
<reference key="3">
    <citation type="journal article" date="2017" name="Plant J.">
        <title>Araport11: a complete reannotation of the Arabidopsis thaliana reference genome.</title>
        <authorList>
            <person name="Cheng C.Y."/>
            <person name="Krishnakumar V."/>
            <person name="Chan A.P."/>
            <person name="Thibaud-Nissen F."/>
            <person name="Schobel S."/>
            <person name="Town C.D."/>
        </authorList>
    </citation>
    <scope>GENOME REANNOTATION</scope>
    <source>
        <strain>cv. Columbia</strain>
    </source>
</reference>
<reference key="4">
    <citation type="journal article" date="2003" name="Science">
        <title>Empirical analysis of transcriptional activity in the Arabidopsis genome.</title>
        <authorList>
            <person name="Yamada K."/>
            <person name="Lim J."/>
            <person name="Dale J.M."/>
            <person name="Chen H."/>
            <person name="Shinn P."/>
            <person name="Palm C.J."/>
            <person name="Southwick A.M."/>
            <person name="Wu H.C."/>
            <person name="Kim C.J."/>
            <person name="Nguyen M."/>
            <person name="Pham P.K."/>
            <person name="Cheuk R.F."/>
            <person name="Karlin-Newmann G."/>
            <person name="Liu S.X."/>
            <person name="Lam B."/>
            <person name="Sakano H."/>
            <person name="Wu T."/>
            <person name="Yu G."/>
            <person name="Miranda M."/>
            <person name="Quach H.L."/>
            <person name="Tripp M."/>
            <person name="Chang C.H."/>
            <person name="Lee J.M."/>
            <person name="Toriumi M.J."/>
            <person name="Chan M.M."/>
            <person name="Tang C.C."/>
            <person name="Onodera C.S."/>
            <person name="Deng J.M."/>
            <person name="Akiyama K."/>
            <person name="Ansari Y."/>
            <person name="Arakawa T."/>
            <person name="Banh J."/>
            <person name="Banno F."/>
            <person name="Bowser L."/>
            <person name="Brooks S.Y."/>
            <person name="Carninci P."/>
            <person name="Chao Q."/>
            <person name="Choy N."/>
            <person name="Enju A."/>
            <person name="Goldsmith A.D."/>
            <person name="Gurjal M."/>
            <person name="Hansen N.F."/>
            <person name="Hayashizaki Y."/>
            <person name="Johnson-Hopson C."/>
            <person name="Hsuan V.W."/>
            <person name="Iida K."/>
            <person name="Karnes M."/>
            <person name="Khan S."/>
            <person name="Koesema E."/>
            <person name="Ishida J."/>
            <person name="Jiang P.X."/>
            <person name="Jones T."/>
            <person name="Kawai J."/>
            <person name="Kamiya A."/>
            <person name="Meyers C."/>
            <person name="Nakajima M."/>
            <person name="Narusaka M."/>
            <person name="Seki M."/>
            <person name="Sakurai T."/>
            <person name="Satou M."/>
            <person name="Tamse R."/>
            <person name="Vaysberg M."/>
            <person name="Wallender E.K."/>
            <person name="Wong C."/>
            <person name="Yamamura Y."/>
            <person name="Yuan S."/>
            <person name="Shinozaki K."/>
            <person name="Davis R.W."/>
            <person name="Theologis A."/>
            <person name="Ecker J.R."/>
        </authorList>
    </citation>
    <scope>NUCLEOTIDE SEQUENCE [LARGE SCALE MRNA]</scope>
    <source>
        <strain>cv. Columbia</strain>
    </source>
</reference>
<reference key="5">
    <citation type="submission" date="2002-03" db="EMBL/GenBank/DDBJ databases">
        <title>Full-length cDNA from Arabidopsis thaliana.</title>
        <authorList>
            <person name="Brover V.V."/>
            <person name="Troukhan M.E."/>
            <person name="Alexandrov N.A."/>
            <person name="Lu Y.-P."/>
            <person name="Flavell R.B."/>
            <person name="Feldmann K.A."/>
        </authorList>
    </citation>
    <scope>NUCLEOTIDE SEQUENCE [LARGE SCALE MRNA]</scope>
</reference>
<reference key="6">
    <citation type="journal article" date="2009" name="Plant Cell Physiol.">
        <title>Plant cells without detectable plastids are generated in the crumpled leaf mutant of Arabidopsis thaliana.</title>
        <authorList>
            <person name="Chen Y."/>
            <person name="Asano T."/>
            <person name="Fujiwara M.T."/>
            <person name="Yoshida S."/>
            <person name="Machida Y."/>
            <person name="Yoshioka Y."/>
        </authorList>
    </citation>
    <scope>FUNCTION</scope>
    <scope>DISRUPTION PHENOTYPE</scope>
</reference>
<reference key="7">
    <citation type="journal article" date="2009" name="Virol. J.">
        <title>The infective cycle of Cabbage leaf curl virus (CaLCuV) is affected by CRUMPLED LEAF (CRL) gene in Arabidopsis thaliana.</title>
        <authorList>
            <person name="Trejo-Saavedra D.L."/>
            <person name="Vielle-Calzada J.P."/>
            <person name="Rivera-Bustamante R.F."/>
        </authorList>
    </citation>
    <scope>FUNCTION</scope>
    <scope>DISRUPTION PHENOTYPE</scope>
    <scope>INDUCTION BY CABBAGE LEAF CURL VIRUS</scope>
    <source>
        <strain>cv. Columbia</strain>
    </source>
</reference>
<reference key="8">
    <citation type="journal article" date="2012" name="Plant J.">
        <title>The chloroplast division mutant caa33 of Arabidopsis thaliana reveals the crucial impact of chloroplast homeostasis on stress acclimation and retrograde plastid-to-nucleus signaling.</title>
        <authorList>
            <person name="Simkova K."/>
            <person name="Kim C."/>
            <person name="Gacek K."/>
            <person name="Baruah A."/>
            <person name="Laloi C."/>
            <person name="Apel K."/>
        </authorList>
    </citation>
    <scope>FUNCTION</scope>
    <scope>MUTAGENESIS OF GLY-31</scope>
    <source>
        <strain>cv. Columbia</strain>
    </source>
</reference>
<gene>
    <name type="primary">CRL</name>
    <name type="synonym">CAA33</name>
    <name type="ordered locus">At5g51020</name>
    <name type="ORF">K3K7.20</name>
</gene>
<comment type="function">
    <text evidence="1 3 4 5 6">Covalently attaches a chromophore to Cys residue(s) of phycobiliproteins (By similarity). Required for plastid division, and involved in cell differentiation and regulation of the cell division plane. Maintenance of plastid homeostasis controls plant preconditioning to stress and stress acclimation.</text>
</comment>
<comment type="function">
    <text>Confers sensitivity to cabbage leaf curl virus (CaLCuV), probably by supporting viral movement.</text>
</comment>
<comment type="subcellular location">
    <subcellularLocation>
        <location evidence="3">Plastid</location>
        <location evidence="3">Chloroplast outer membrane</location>
        <topology evidence="3">Single-pass membrane protein</topology>
    </subcellularLocation>
</comment>
<comment type="tissue specificity">
    <text evidence="3">Mostly expressed in shoot apices, to a lower extent, in leaves, inflorescence stems, buds and cotyledons, and, at low levels, in roots and siliques.</text>
</comment>
<comment type="induction">
    <text evidence="5">Transient strong induction in response to cabbage leaf curl virus (CaLCuV) infection at an early stage.</text>
</comment>
<comment type="disruption phenotype">
    <text evidence="3 4 5">Abnormal organ morphology (e.g. pale green, reduced stature, crumpled and irregular margins in leaves and floral organs, and shorter roots) due to altered pattern of cell division and differentiation. Impaired plastid division leading to enlarged chloroplasts and the formation of cells lacking plastids. Reduced susceptibility to viral infection by cabbage leaf curl virus (CaLCuV).</text>
</comment>
<comment type="similarity">
    <text evidence="7">Belongs to the CpcT/CpeT biliprotein lyase family.</text>
</comment>
<protein>
    <recommendedName>
        <fullName>Chromophore lyase CRL, chloroplastic</fullName>
        <ecNumber>4.-.-.-</ecNumber>
    </recommendedName>
    <alternativeName>
        <fullName>Protein CONSTITUTIVE ACTIVATOR OF AAA-ATPase 33</fullName>
    </alternativeName>
    <alternativeName>
        <fullName>Protein CRUMPLED LEAF</fullName>
    </alternativeName>
</protein>
<accession>Q9FI46</accession>
<accession>Q8LCJ3</accession>
<feature type="chain" id="PRO_0000429739" description="Chromophore lyase CRL, chloroplastic">
    <location>
        <begin position="1"/>
        <end position="269"/>
    </location>
</feature>
<feature type="transmembrane region" description="Helical" evidence="2">
    <location>
        <begin position="19"/>
        <end position="36"/>
    </location>
</feature>
<feature type="mutagenesis site" description="In crl-2; impeded plastid division leading to enlarged chloroplasts in mesophyll cells and abnormal plastid homeostasis, thus resulting in preconditioning plants by activating the expression of stress genes, enhancing pathogen resistance (e.g. Pseudomonas syringae DC3000) and attenuating the capacity to respond to plastid signals. Spontaneous light intensity-dependent cell death formation associated with O(2) production." evidence="6">
    <original>G</original>
    <variation>D</variation>
    <location>
        <position position="31"/>
    </location>
</feature>
<feature type="helix" evidence="8">
    <location>
        <begin position="45"/>
        <end position="56"/>
    </location>
</feature>
<feature type="strand" evidence="8">
    <location>
        <begin position="57"/>
        <end position="61"/>
    </location>
</feature>
<feature type="helix" evidence="8">
    <location>
        <begin position="63"/>
        <end position="68"/>
    </location>
</feature>
<feature type="turn" evidence="8">
    <location>
        <begin position="70"/>
        <end position="72"/>
    </location>
</feature>
<feature type="strand" evidence="8">
    <location>
        <begin position="76"/>
        <end position="85"/>
    </location>
</feature>
<feature type="strand" evidence="8">
    <location>
        <begin position="91"/>
        <end position="99"/>
    </location>
</feature>
<feature type="strand" evidence="8">
    <location>
        <begin position="107"/>
        <end position="116"/>
    </location>
</feature>
<feature type="strand" evidence="8">
    <location>
        <begin position="124"/>
        <end position="132"/>
    </location>
</feature>
<feature type="helix" evidence="8">
    <location>
        <begin position="135"/>
        <end position="138"/>
    </location>
</feature>
<feature type="helix" evidence="8">
    <location>
        <begin position="141"/>
        <end position="143"/>
    </location>
</feature>
<feature type="helix" evidence="8">
    <location>
        <begin position="146"/>
        <end position="148"/>
    </location>
</feature>
<feature type="helix" evidence="8">
    <location>
        <begin position="152"/>
        <end position="157"/>
    </location>
</feature>
<feature type="strand" evidence="8">
    <location>
        <begin position="159"/>
        <end position="170"/>
    </location>
</feature>
<feature type="strand" evidence="8">
    <location>
        <begin position="178"/>
        <end position="183"/>
    </location>
</feature>
<feature type="strand" evidence="8">
    <location>
        <begin position="197"/>
        <end position="205"/>
    </location>
</feature>
<feature type="helix" evidence="8">
    <location>
        <begin position="206"/>
        <end position="208"/>
    </location>
</feature>
<feature type="strand" evidence="8">
    <location>
        <begin position="209"/>
        <end position="217"/>
    </location>
</feature>
<feature type="strand" evidence="8">
    <location>
        <begin position="223"/>
        <end position="226"/>
    </location>
</feature>
<feature type="strand" evidence="8">
    <location>
        <begin position="228"/>
        <end position="230"/>
    </location>
</feature>
<feature type="strand" evidence="8">
    <location>
        <begin position="232"/>
        <end position="236"/>
    </location>
</feature>